<evidence type="ECO:0000255" key="1">
    <source>
        <dbReference type="HAMAP-Rule" id="MF_01208"/>
    </source>
</evidence>
<gene>
    <name evidence="1" type="primary">pyrE</name>
    <name type="synonym">pyrE2</name>
    <name type="ordered locus">VNG_2118G</name>
</gene>
<keyword id="KW-0328">Glycosyltransferase</keyword>
<keyword id="KW-0460">Magnesium</keyword>
<keyword id="KW-0665">Pyrimidine biosynthesis</keyword>
<keyword id="KW-1185">Reference proteome</keyword>
<keyword id="KW-0808">Transferase</keyword>
<feature type="chain" id="PRO_0000110777" description="Orotate phosphoribosyltransferase">
    <location>
        <begin position="1"/>
        <end position="175"/>
    </location>
</feature>
<feature type="binding site" evidence="1">
    <location>
        <position position="89"/>
    </location>
    <ligand>
        <name>5-phospho-alpha-D-ribose 1-diphosphate</name>
        <dbReference type="ChEBI" id="CHEBI:58017"/>
        <note>ligand shared between dimeric partners</note>
    </ligand>
</feature>
<feature type="binding site" description="in other chain" evidence="1">
    <location>
        <position position="90"/>
    </location>
    <ligand>
        <name>5-phospho-alpha-D-ribose 1-diphosphate</name>
        <dbReference type="ChEBI" id="CHEBI:58017"/>
        <note>ligand shared between dimeric partners</note>
    </ligand>
</feature>
<feature type="binding site" evidence="1">
    <location>
        <position position="93"/>
    </location>
    <ligand>
        <name>5-phospho-alpha-D-ribose 1-diphosphate</name>
        <dbReference type="ChEBI" id="CHEBI:58017"/>
        <note>ligand shared between dimeric partners</note>
    </ligand>
</feature>
<feature type="binding site" description="in other chain" evidence="1">
    <location>
        <begin position="115"/>
        <end position="123"/>
    </location>
    <ligand>
        <name>5-phospho-alpha-D-ribose 1-diphosphate</name>
        <dbReference type="ChEBI" id="CHEBI:58017"/>
        <note>ligand shared between dimeric partners</note>
    </ligand>
</feature>
<feature type="binding site" evidence="1">
    <location>
        <position position="119"/>
    </location>
    <ligand>
        <name>orotate</name>
        <dbReference type="ChEBI" id="CHEBI:30839"/>
    </ligand>
</feature>
<feature type="binding site" evidence="1">
    <location>
        <position position="147"/>
    </location>
    <ligand>
        <name>orotate</name>
        <dbReference type="ChEBI" id="CHEBI:30839"/>
    </ligand>
</feature>
<comment type="function">
    <text evidence="1">Catalyzes the transfer of a ribosyl phosphate group from 5-phosphoribose 1-diphosphate to orotate, leading to the formation of orotidine monophosphate (OMP).</text>
</comment>
<comment type="catalytic activity">
    <reaction evidence="1">
        <text>orotidine 5'-phosphate + diphosphate = orotate + 5-phospho-alpha-D-ribose 1-diphosphate</text>
        <dbReference type="Rhea" id="RHEA:10380"/>
        <dbReference type="ChEBI" id="CHEBI:30839"/>
        <dbReference type="ChEBI" id="CHEBI:33019"/>
        <dbReference type="ChEBI" id="CHEBI:57538"/>
        <dbReference type="ChEBI" id="CHEBI:58017"/>
        <dbReference type="EC" id="2.4.2.10"/>
    </reaction>
</comment>
<comment type="cofactor">
    <cofactor evidence="1">
        <name>Mg(2+)</name>
        <dbReference type="ChEBI" id="CHEBI:18420"/>
    </cofactor>
</comment>
<comment type="pathway">
    <text evidence="1">Pyrimidine metabolism; UMP biosynthesis via de novo pathway; UMP from orotate: step 1/2.</text>
</comment>
<comment type="subunit">
    <text evidence="1">Homodimer.</text>
</comment>
<comment type="similarity">
    <text evidence="1">Belongs to the purine/pyrimidine phosphoribosyltransferase family. PyrE subfamily.</text>
</comment>
<sequence>MSATDDLVSALRAADAVQFGEFELSHGGTSEYYVDKYLFETDPECLSAIAAAFADRIDEDTTLAGVALGGVPLAAATATEAGVPYVIARKQAKEYGTANRIEGRLDDGEEVVVVEDIATTGQSAVDAVDALRDAGATVNRALIVVDREEGGRELLAEHGVEMAALVTASDLLDAE</sequence>
<dbReference type="EC" id="2.4.2.10" evidence="1"/>
<dbReference type="EMBL" id="AE004437">
    <property type="protein sequence ID" value="AAG20258.1"/>
    <property type="molecule type" value="Genomic_DNA"/>
</dbReference>
<dbReference type="PIR" id="F84361">
    <property type="entry name" value="F84361"/>
</dbReference>
<dbReference type="RefSeq" id="WP_010903560.1">
    <property type="nucleotide sequence ID" value="NC_002607.1"/>
</dbReference>
<dbReference type="SMR" id="Q9HNG2"/>
<dbReference type="FunCoup" id="Q9HNG2">
    <property type="interactions" value="110"/>
</dbReference>
<dbReference type="STRING" id="64091.VNG_2118G"/>
<dbReference type="PaxDb" id="64091-VNG_2118G"/>
<dbReference type="GeneID" id="68694688"/>
<dbReference type="KEGG" id="hal:VNG_2118G"/>
<dbReference type="PATRIC" id="fig|64091.14.peg.1618"/>
<dbReference type="HOGENOM" id="CLU_074878_2_0_2"/>
<dbReference type="InParanoid" id="Q9HNG2"/>
<dbReference type="OrthoDB" id="9089at2157"/>
<dbReference type="PhylomeDB" id="Q9HNG2"/>
<dbReference type="UniPathway" id="UPA00070">
    <property type="reaction ID" value="UER00119"/>
</dbReference>
<dbReference type="Proteomes" id="UP000000554">
    <property type="component" value="Chromosome"/>
</dbReference>
<dbReference type="GO" id="GO:0000287">
    <property type="term" value="F:magnesium ion binding"/>
    <property type="evidence" value="ECO:0007669"/>
    <property type="project" value="UniProtKB-UniRule"/>
</dbReference>
<dbReference type="GO" id="GO:0004588">
    <property type="term" value="F:orotate phosphoribosyltransferase activity"/>
    <property type="evidence" value="ECO:0000318"/>
    <property type="project" value="GO_Central"/>
</dbReference>
<dbReference type="GO" id="GO:0044205">
    <property type="term" value="P:'de novo' UMP biosynthetic process"/>
    <property type="evidence" value="ECO:0007669"/>
    <property type="project" value="UniProtKB-UniRule"/>
</dbReference>
<dbReference type="GO" id="GO:0019856">
    <property type="term" value="P:pyrimidine nucleobase biosynthetic process"/>
    <property type="evidence" value="ECO:0000318"/>
    <property type="project" value="GO_Central"/>
</dbReference>
<dbReference type="GO" id="GO:0006222">
    <property type="term" value="P:UMP biosynthetic process"/>
    <property type="evidence" value="ECO:0000318"/>
    <property type="project" value="GO_Central"/>
</dbReference>
<dbReference type="CDD" id="cd06223">
    <property type="entry name" value="PRTases_typeI"/>
    <property type="match status" value="1"/>
</dbReference>
<dbReference type="Gene3D" id="3.40.50.2020">
    <property type="match status" value="1"/>
</dbReference>
<dbReference type="HAMAP" id="MF_01208">
    <property type="entry name" value="PyrE"/>
    <property type="match status" value="1"/>
</dbReference>
<dbReference type="InterPro" id="IPR023031">
    <property type="entry name" value="OPRT"/>
</dbReference>
<dbReference type="InterPro" id="IPR004467">
    <property type="entry name" value="Or_phspho_trans_dom"/>
</dbReference>
<dbReference type="InterPro" id="IPR000836">
    <property type="entry name" value="PRibTrfase_dom"/>
</dbReference>
<dbReference type="InterPro" id="IPR029057">
    <property type="entry name" value="PRTase-like"/>
</dbReference>
<dbReference type="NCBIfam" id="TIGR00336">
    <property type="entry name" value="pyrE"/>
    <property type="match status" value="1"/>
</dbReference>
<dbReference type="PANTHER" id="PTHR19278">
    <property type="entry name" value="OROTATE PHOSPHORIBOSYLTRANSFERASE"/>
    <property type="match status" value="1"/>
</dbReference>
<dbReference type="PANTHER" id="PTHR19278:SF9">
    <property type="entry name" value="URIDINE 5'-MONOPHOSPHATE SYNTHASE"/>
    <property type="match status" value="1"/>
</dbReference>
<dbReference type="Pfam" id="PF00156">
    <property type="entry name" value="Pribosyltran"/>
    <property type="match status" value="1"/>
</dbReference>
<dbReference type="SUPFAM" id="SSF53271">
    <property type="entry name" value="PRTase-like"/>
    <property type="match status" value="1"/>
</dbReference>
<protein>
    <recommendedName>
        <fullName evidence="1">Orotate phosphoribosyltransferase</fullName>
        <shortName evidence="1">OPRT</shortName>
        <shortName evidence="1">OPRTase</shortName>
        <ecNumber evidence="1">2.4.2.10</ecNumber>
    </recommendedName>
</protein>
<name>PYRE_HALSA</name>
<organism>
    <name type="scientific">Halobacterium salinarum (strain ATCC 700922 / JCM 11081 / NRC-1)</name>
    <name type="common">Halobacterium halobium</name>
    <dbReference type="NCBI Taxonomy" id="64091"/>
    <lineage>
        <taxon>Archaea</taxon>
        <taxon>Methanobacteriati</taxon>
        <taxon>Methanobacteriota</taxon>
        <taxon>Stenosarchaea group</taxon>
        <taxon>Halobacteria</taxon>
        <taxon>Halobacteriales</taxon>
        <taxon>Halobacteriaceae</taxon>
        <taxon>Halobacterium</taxon>
        <taxon>Halobacterium salinarum NRC-34001</taxon>
    </lineage>
</organism>
<reference key="1">
    <citation type="journal article" date="2000" name="Proc. Natl. Acad. Sci. U.S.A.">
        <title>Genome sequence of Halobacterium species NRC-1.</title>
        <authorList>
            <person name="Ng W.V."/>
            <person name="Kennedy S.P."/>
            <person name="Mahairas G.G."/>
            <person name="Berquist B."/>
            <person name="Pan M."/>
            <person name="Shukla H.D."/>
            <person name="Lasky S.R."/>
            <person name="Baliga N.S."/>
            <person name="Thorsson V."/>
            <person name="Sbrogna J."/>
            <person name="Swartzell S."/>
            <person name="Weir D."/>
            <person name="Hall J."/>
            <person name="Dahl T.A."/>
            <person name="Welti R."/>
            <person name="Goo Y.A."/>
            <person name="Leithauser B."/>
            <person name="Keller K."/>
            <person name="Cruz R."/>
            <person name="Danson M.J."/>
            <person name="Hough D.W."/>
            <person name="Maddocks D.G."/>
            <person name="Jablonski P.E."/>
            <person name="Krebs M.P."/>
            <person name="Angevine C.M."/>
            <person name="Dale H."/>
            <person name="Isenbarger T.A."/>
            <person name="Peck R.F."/>
            <person name="Pohlschroder M."/>
            <person name="Spudich J.L."/>
            <person name="Jung K.-H."/>
            <person name="Alam M."/>
            <person name="Freitas T."/>
            <person name="Hou S."/>
            <person name="Daniels C.J."/>
            <person name="Dennis P.P."/>
            <person name="Omer A.D."/>
            <person name="Ebhardt H."/>
            <person name="Lowe T.M."/>
            <person name="Liang P."/>
            <person name="Riley M."/>
            <person name="Hood L."/>
            <person name="DasSarma S."/>
        </authorList>
    </citation>
    <scope>NUCLEOTIDE SEQUENCE [LARGE SCALE GENOMIC DNA]</scope>
    <source>
        <strain>ATCC 700922 / JCM 11081 / NRC-1</strain>
    </source>
</reference>
<proteinExistence type="inferred from homology"/>
<accession>Q9HNG2</accession>